<comment type="function">
    <text evidence="2 3">Ras proteins bind GDP/GTP and possess intrinsic GTPase activity. Plays a role in eye development by regulating cell growth, survival of postmitotic ommatidial cells and differentiation of photoreceptor cells. During larval development, mediates Ptth/tor signaling leading to the production of ecdysone, a hormone required for the initiation of metamorphosis.</text>
</comment>
<comment type="catalytic activity">
    <reaction evidence="2">
        <text>GTP + H2O = GDP + phosphate + H(+)</text>
        <dbReference type="Rhea" id="RHEA:19669"/>
        <dbReference type="ChEBI" id="CHEBI:15377"/>
        <dbReference type="ChEBI" id="CHEBI:15378"/>
        <dbReference type="ChEBI" id="CHEBI:37565"/>
        <dbReference type="ChEBI" id="CHEBI:43474"/>
        <dbReference type="ChEBI" id="CHEBI:58189"/>
        <dbReference type="EC" id="3.6.5.2"/>
    </reaction>
</comment>
<comment type="activity regulation">
    <text>Alternates between an inactive form bound to GDP and an active form bound to GTP. Activated by a guanine nucleotide-exchange factor (GEF) and inactivated by a GTPase-activating protein (GAP).</text>
</comment>
<comment type="subcellular location">
    <subcellularLocation>
        <location evidence="1">Cell membrane</location>
        <topology evidence="1">Lipid-anchor</topology>
        <orientation evidence="1">Cytoplasmic side</orientation>
    </subcellularLocation>
</comment>
<comment type="similarity">
    <text evidence="4">Belongs to the small GTPase superfamily. Ras family.</text>
</comment>
<sequence length="189" mass="21594">MTEYKLVVVGAGGVGKSALTIQLIQNHFVDEYDPTIEDSYRKQVVIDGETCLLDILDTAGQEEYSAMRDQYMRTGEGFLLVFAVNSAKSFEDIGTYREQIKRVKDAEEVPMVLVGNKCDLASWNVNNEQAREVAKQYGIPYIETSAKTRMGVDDAFYTLVREIRKDKDNKGRRGRKMNKPNRRFKCKML</sequence>
<name>RAS1_DROSI</name>
<dbReference type="EC" id="3.6.5.2" evidence="2"/>
<dbReference type="EMBL" id="AF186649">
    <property type="protein sequence ID" value="AAF15515.1"/>
    <property type="molecule type" value="Genomic_DNA"/>
</dbReference>
<dbReference type="EMBL" id="CM000364">
    <property type="protein sequence ID" value="EDX13621.1"/>
    <property type="molecule type" value="Genomic_DNA"/>
</dbReference>
<dbReference type="EMBL" id="AY459550">
    <property type="protein sequence ID" value="AAR23008.1"/>
    <property type="molecule type" value="Genomic_DNA"/>
</dbReference>
<dbReference type="SMR" id="P83831"/>
<dbReference type="STRING" id="7240.P83831"/>
<dbReference type="EnsemblMetazoa" id="FBtr0220701">
    <property type="protein sequence ID" value="FBpp0219193"/>
    <property type="gene ID" value="FBgn0029246"/>
</dbReference>
<dbReference type="EnsemblMetazoa" id="XM_016177119.3">
    <property type="protein sequence ID" value="XP_016035463.1"/>
    <property type="gene ID" value="LOC6728783"/>
</dbReference>
<dbReference type="GeneID" id="6728783"/>
<dbReference type="KEGG" id="dsi:Dsimw501_GD20791"/>
<dbReference type="CTD" id="41140"/>
<dbReference type="HOGENOM" id="CLU_041217_9_8_1"/>
<dbReference type="OMA" id="CCGGCVI"/>
<dbReference type="OrthoDB" id="5976022at2759"/>
<dbReference type="PhylomeDB" id="P83831"/>
<dbReference type="ChiTaRS" id="Ras85D">
    <property type="organism name" value="fly"/>
</dbReference>
<dbReference type="Proteomes" id="UP000000304">
    <property type="component" value="Chromosome 3R"/>
</dbReference>
<dbReference type="Bgee" id="FBgn0029246">
    <property type="expression patterns" value="Expressed in embryo and 3 other cell types or tissues"/>
</dbReference>
<dbReference type="GO" id="GO:0005886">
    <property type="term" value="C:plasma membrane"/>
    <property type="evidence" value="ECO:0007669"/>
    <property type="project" value="UniProtKB-SubCell"/>
</dbReference>
<dbReference type="GO" id="GO:0003925">
    <property type="term" value="F:G protein activity"/>
    <property type="evidence" value="ECO:0007669"/>
    <property type="project" value="UniProtKB-EC"/>
</dbReference>
<dbReference type="GO" id="GO:0005525">
    <property type="term" value="F:GTP binding"/>
    <property type="evidence" value="ECO:0007669"/>
    <property type="project" value="UniProtKB-KW"/>
</dbReference>
<dbReference type="GO" id="GO:0043539">
    <property type="term" value="F:protein serine/threonine kinase activator activity"/>
    <property type="evidence" value="ECO:0007669"/>
    <property type="project" value="EnsemblMetazoa"/>
</dbReference>
<dbReference type="GO" id="GO:0007298">
    <property type="term" value="P:border follicle cell migration"/>
    <property type="evidence" value="ECO:0007669"/>
    <property type="project" value="EnsemblMetazoa"/>
</dbReference>
<dbReference type="GO" id="GO:0009267">
    <property type="term" value="P:cellular response to starvation"/>
    <property type="evidence" value="ECO:0007669"/>
    <property type="project" value="EnsemblMetazoa"/>
</dbReference>
<dbReference type="GO" id="GO:0030381">
    <property type="term" value="P:chorion-containing eggshell pattern formation"/>
    <property type="evidence" value="ECO:0007669"/>
    <property type="project" value="EnsemblMetazoa"/>
</dbReference>
<dbReference type="GO" id="GO:0051607">
    <property type="term" value="P:defense response to virus"/>
    <property type="evidence" value="ECO:0007669"/>
    <property type="project" value="EnsemblMetazoa"/>
</dbReference>
<dbReference type="GO" id="GO:0008340">
    <property type="term" value="P:determination of adult lifespan"/>
    <property type="evidence" value="ECO:0007669"/>
    <property type="project" value="EnsemblMetazoa"/>
</dbReference>
<dbReference type="GO" id="GO:0007395">
    <property type="term" value="P:dorsal closure, spreading of leading edge cells"/>
    <property type="evidence" value="ECO:0007669"/>
    <property type="project" value="EnsemblMetazoa"/>
</dbReference>
<dbReference type="GO" id="GO:0007173">
    <property type="term" value="P:epidermal growth factor receptor signaling pathway"/>
    <property type="evidence" value="ECO:0007669"/>
    <property type="project" value="EnsemblMetazoa"/>
</dbReference>
<dbReference type="GO" id="GO:0007427">
    <property type="term" value="P:epithelial cell migration, open tracheal system"/>
    <property type="evidence" value="ECO:0007669"/>
    <property type="project" value="EnsemblMetazoa"/>
</dbReference>
<dbReference type="GO" id="GO:0035088">
    <property type="term" value="P:establishment or maintenance of apical/basal cell polarity"/>
    <property type="evidence" value="ECO:0007669"/>
    <property type="project" value="EnsemblMetazoa"/>
</dbReference>
<dbReference type="GO" id="GO:0007455">
    <property type="term" value="P:eye-antennal disc morphogenesis"/>
    <property type="evidence" value="ECO:0007669"/>
    <property type="project" value="EnsemblMetazoa"/>
</dbReference>
<dbReference type="GO" id="GO:0008543">
    <property type="term" value="P:fibroblast growth factor receptor signaling pathway"/>
    <property type="evidence" value="ECO:0007669"/>
    <property type="project" value="EnsemblMetazoa"/>
</dbReference>
<dbReference type="GO" id="GO:0035099">
    <property type="term" value="P:hemocyte migration"/>
    <property type="evidence" value="ECO:0007669"/>
    <property type="project" value="EnsemblMetazoa"/>
</dbReference>
<dbReference type="GO" id="GO:0008586">
    <property type="term" value="P:imaginal disc-derived wing vein morphogenesis"/>
    <property type="evidence" value="ECO:0007669"/>
    <property type="project" value="EnsemblMetazoa"/>
</dbReference>
<dbReference type="GO" id="GO:0007474">
    <property type="term" value="P:imaginal disc-derived wing vein specification"/>
    <property type="evidence" value="ECO:0007669"/>
    <property type="project" value="EnsemblMetazoa"/>
</dbReference>
<dbReference type="GO" id="GO:0002168">
    <property type="term" value="P:instar larval development"/>
    <property type="evidence" value="ECO:0007669"/>
    <property type="project" value="EnsemblMetazoa"/>
</dbReference>
<dbReference type="GO" id="GO:0036335">
    <property type="term" value="P:intestinal stem cell homeostasis"/>
    <property type="evidence" value="ECO:0007669"/>
    <property type="project" value="EnsemblMetazoa"/>
</dbReference>
<dbReference type="GO" id="GO:0007479">
    <property type="term" value="P:leg disc proximal/distal pattern formation"/>
    <property type="evidence" value="ECO:0007669"/>
    <property type="project" value="EnsemblMetazoa"/>
</dbReference>
<dbReference type="GO" id="GO:0035170">
    <property type="term" value="P:lymph gland crystal cell differentiation"/>
    <property type="evidence" value="ECO:0007669"/>
    <property type="project" value="EnsemblMetazoa"/>
</dbReference>
<dbReference type="GO" id="GO:0035169">
    <property type="term" value="P:lymph gland plasmatocyte differentiation"/>
    <property type="evidence" value="ECO:0007669"/>
    <property type="project" value="EnsemblMetazoa"/>
</dbReference>
<dbReference type="GO" id="GO:0072002">
    <property type="term" value="P:Malpighian tubule development"/>
    <property type="evidence" value="ECO:0007669"/>
    <property type="project" value="EnsemblMetazoa"/>
</dbReference>
<dbReference type="GO" id="GO:0000165">
    <property type="term" value="P:MAPK cascade"/>
    <property type="evidence" value="ECO:0007669"/>
    <property type="project" value="EnsemblMetazoa"/>
</dbReference>
<dbReference type="GO" id="GO:0001710">
    <property type="term" value="P:mesodermal cell fate commitment"/>
    <property type="evidence" value="ECO:0007669"/>
    <property type="project" value="EnsemblMetazoa"/>
</dbReference>
<dbReference type="GO" id="GO:0048626">
    <property type="term" value="P:myoblast fate specification"/>
    <property type="evidence" value="ECO:0007669"/>
    <property type="project" value="EnsemblMetazoa"/>
</dbReference>
<dbReference type="GO" id="GO:2001234">
    <property type="term" value="P:negative regulation of apoptotic signaling pathway"/>
    <property type="evidence" value="ECO:0007669"/>
    <property type="project" value="EnsemblMetazoa"/>
</dbReference>
<dbReference type="GO" id="GO:0046673">
    <property type="term" value="P:negative regulation of compound eye retinal cell programmed cell death"/>
    <property type="evidence" value="ECO:0007669"/>
    <property type="project" value="EnsemblMetazoa"/>
</dbReference>
<dbReference type="GO" id="GO:0010629">
    <property type="term" value="P:negative regulation of gene expression"/>
    <property type="evidence" value="ECO:0007669"/>
    <property type="project" value="EnsemblMetazoa"/>
</dbReference>
<dbReference type="GO" id="GO:0016242">
    <property type="term" value="P:negative regulation of macroautophagy"/>
    <property type="evidence" value="ECO:0007669"/>
    <property type="project" value="EnsemblMetazoa"/>
</dbReference>
<dbReference type="GO" id="GO:0016318">
    <property type="term" value="P:ommatidial rotation"/>
    <property type="evidence" value="ECO:0007669"/>
    <property type="project" value="EnsemblMetazoa"/>
</dbReference>
<dbReference type="GO" id="GO:0007309">
    <property type="term" value="P:oocyte axis specification"/>
    <property type="evidence" value="ECO:0007669"/>
    <property type="project" value="EnsemblMetazoa"/>
</dbReference>
<dbReference type="GO" id="GO:0007422">
    <property type="term" value="P:peripheral nervous system development"/>
    <property type="evidence" value="ECO:0007669"/>
    <property type="project" value="EnsemblMetazoa"/>
</dbReference>
<dbReference type="GO" id="GO:0043703">
    <property type="term" value="P:photoreceptor cell fate determination"/>
    <property type="evidence" value="ECO:0007669"/>
    <property type="project" value="EnsemblMetazoa"/>
</dbReference>
<dbReference type="GO" id="GO:0008594">
    <property type="term" value="P:photoreceptor cell morphogenesis"/>
    <property type="evidence" value="ECO:0007669"/>
    <property type="project" value="EnsemblMetazoa"/>
</dbReference>
<dbReference type="GO" id="GO:0045793">
    <property type="term" value="P:positive regulation of cell size"/>
    <property type="evidence" value="ECO:0007669"/>
    <property type="project" value="EnsemblMetazoa"/>
</dbReference>
<dbReference type="GO" id="GO:0070374">
    <property type="term" value="P:positive regulation of ERK1 and ERK2 cascade"/>
    <property type="evidence" value="ECO:0007669"/>
    <property type="project" value="EnsemblMetazoa"/>
</dbReference>
<dbReference type="GO" id="GO:0035208">
    <property type="term" value="P:positive regulation of hemocyte proliferation"/>
    <property type="evidence" value="ECO:0007669"/>
    <property type="project" value="EnsemblMetazoa"/>
</dbReference>
<dbReference type="GO" id="GO:0046534">
    <property type="term" value="P:positive regulation of photoreceptor cell differentiation"/>
    <property type="evidence" value="ECO:0007669"/>
    <property type="project" value="EnsemblMetazoa"/>
</dbReference>
<dbReference type="GO" id="GO:1904263">
    <property type="term" value="P:positive regulation of TORC1 signaling"/>
    <property type="evidence" value="ECO:0007669"/>
    <property type="project" value="EnsemblMetazoa"/>
</dbReference>
<dbReference type="GO" id="GO:0045465">
    <property type="term" value="P:R8 cell differentiation"/>
    <property type="evidence" value="ECO:0007669"/>
    <property type="project" value="EnsemblMetazoa"/>
</dbReference>
<dbReference type="GO" id="GO:0007265">
    <property type="term" value="P:Ras protein signal transduction"/>
    <property type="evidence" value="ECO:0007669"/>
    <property type="project" value="EnsemblMetazoa"/>
</dbReference>
<dbReference type="GO" id="GO:0040014">
    <property type="term" value="P:regulation of multicellular organism growth"/>
    <property type="evidence" value="ECO:0007669"/>
    <property type="project" value="EnsemblMetazoa"/>
</dbReference>
<dbReference type="GO" id="GO:0045500">
    <property type="term" value="P:sevenless signaling pathway"/>
    <property type="evidence" value="ECO:0007669"/>
    <property type="project" value="EnsemblMetazoa"/>
</dbReference>
<dbReference type="GO" id="GO:0048865">
    <property type="term" value="P:stem cell fate commitment"/>
    <property type="evidence" value="ECO:0007669"/>
    <property type="project" value="EnsemblMetazoa"/>
</dbReference>
<dbReference type="GO" id="GO:0072089">
    <property type="term" value="P:stem cell proliferation"/>
    <property type="evidence" value="ECO:0007669"/>
    <property type="project" value="EnsemblMetazoa"/>
</dbReference>
<dbReference type="GO" id="GO:0007430">
    <property type="term" value="P:terminal branching, open tracheal system"/>
    <property type="evidence" value="ECO:0007669"/>
    <property type="project" value="EnsemblMetazoa"/>
</dbReference>
<dbReference type="GO" id="GO:0007362">
    <property type="term" value="P:terminal region determination"/>
    <property type="evidence" value="ECO:0007669"/>
    <property type="project" value="EnsemblMetazoa"/>
</dbReference>
<dbReference type="GO" id="GO:0008293">
    <property type="term" value="P:torso signaling pathway"/>
    <property type="evidence" value="ECO:0007669"/>
    <property type="project" value="EnsemblMetazoa"/>
</dbReference>
<dbReference type="GO" id="GO:0060438">
    <property type="term" value="P:trachea development"/>
    <property type="evidence" value="ECO:0007669"/>
    <property type="project" value="EnsemblMetazoa"/>
</dbReference>
<dbReference type="GO" id="GO:0007426">
    <property type="term" value="P:tracheal outgrowth, open tracheal system"/>
    <property type="evidence" value="ECO:0007669"/>
    <property type="project" value="EnsemblMetazoa"/>
</dbReference>
<dbReference type="GO" id="GO:0048010">
    <property type="term" value="P:vascular endothelial growth factor receptor signaling pathway"/>
    <property type="evidence" value="ECO:0007669"/>
    <property type="project" value="EnsemblMetazoa"/>
</dbReference>
<dbReference type="GO" id="GO:0035313">
    <property type="term" value="P:wound healing, spreading of epidermal cells"/>
    <property type="evidence" value="ECO:0007669"/>
    <property type="project" value="EnsemblMetazoa"/>
</dbReference>
<dbReference type="CDD" id="cd04138">
    <property type="entry name" value="H_N_K_Ras_like"/>
    <property type="match status" value="1"/>
</dbReference>
<dbReference type="FunFam" id="3.40.50.300:FF:000096">
    <property type="entry name" value="KRAS proto-oncogene, GTPase"/>
    <property type="match status" value="1"/>
</dbReference>
<dbReference type="Gene3D" id="3.40.50.300">
    <property type="entry name" value="P-loop containing nucleotide triphosphate hydrolases"/>
    <property type="match status" value="1"/>
</dbReference>
<dbReference type="InterPro" id="IPR027417">
    <property type="entry name" value="P-loop_NTPase"/>
</dbReference>
<dbReference type="InterPro" id="IPR005225">
    <property type="entry name" value="Small_GTP-bd"/>
</dbReference>
<dbReference type="InterPro" id="IPR001806">
    <property type="entry name" value="Small_GTPase"/>
</dbReference>
<dbReference type="InterPro" id="IPR020849">
    <property type="entry name" value="Small_GTPase_Ras-type"/>
</dbReference>
<dbReference type="NCBIfam" id="TIGR00231">
    <property type="entry name" value="small_GTP"/>
    <property type="match status" value="1"/>
</dbReference>
<dbReference type="PANTHER" id="PTHR24070">
    <property type="entry name" value="RAS, DI-RAS, AND RHEB FAMILY MEMBERS OF SMALL GTPASE SUPERFAMILY"/>
    <property type="match status" value="1"/>
</dbReference>
<dbReference type="Pfam" id="PF00071">
    <property type="entry name" value="Ras"/>
    <property type="match status" value="1"/>
</dbReference>
<dbReference type="PRINTS" id="PR00449">
    <property type="entry name" value="RASTRNSFRMNG"/>
</dbReference>
<dbReference type="SMART" id="SM00175">
    <property type="entry name" value="RAB"/>
    <property type="match status" value="1"/>
</dbReference>
<dbReference type="SMART" id="SM00176">
    <property type="entry name" value="RAN"/>
    <property type="match status" value="1"/>
</dbReference>
<dbReference type="SMART" id="SM00173">
    <property type="entry name" value="RAS"/>
    <property type="match status" value="1"/>
</dbReference>
<dbReference type="SMART" id="SM00174">
    <property type="entry name" value="RHO"/>
    <property type="match status" value="1"/>
</dbReference>
<dbReference type="SUPFAM" id="SSF52540">
    <property type="entry name" value="P-loop containing nucleoside triphosphate hydrolases"/>
    <property type="match status" value="1"/>
</dbReference>
<dbReference type="PROSITE" id="PS51421">
    <property type="entry name" value="RAS"/>
    <property type="match status" value="1"/>
</dbReference>
<proteinExistence type="inferred from homology"/>
<reference evidence="4" key="1">
    <citation type="journal article" date="1999" name="J. Mol. Evol.">
        <title>Absence of protein polymorphism in the Ras genes of Drosophila melanogaster.</title>
        <authorList>
            <person name="Gasperini R."/>
            <person name="Gibson G."/>
        </authorList>
    </citation>
    <scope>NUCLEOTIDE SEQUENCE [GENOMIC DNA]</scope>
</reference>
<reference key="2">
    <citation type="journal article" date="2007" name="Nature">
        <title>Evolution of genes and genomes on the Drosophila phylogeny.</title>
        <authorList>
            <consortium name="Drosophila 12 genomes consortium"/>
        </authorList>
    </citation>
    <scope>NUCLEOTIDE SEQUENCE [LARGE SCALE GENOMIC DNA]</scope>
</reference>
<reference evidence="4" key="3">
    <citation type="journal article" date="2004" name="Genome Res.">
        <title>Patterns of evolutionary constraints in intronic and intergenic DNA of Drosophila.</title>
        <authorList>
            <person name="Halligan D.L."/>
            <person name="Eyre-Walker A."/>
            <person name="Andolfatto P."/>
            <person name="Keightley P.D."/>
        </authorList>
    </citation>
    <scope>NUCLEOTIDE SEQUENCE [GENOMIC DNA] OF 1-18</scope>
</reference>
<feature type="chain" id="PRO_0000082667" description="Ras-like protein 1">
    <location>
        <begin position="1"/>
        <end position="186"/>
    </location>
</feature>
<feature type="propeptide" id="PRO_0000281315" description="Removed in mature form" evidence="1">
    <location>
        <begin position="187"/>
        <end position="189"/>
    </location>
</feature>
<feature type="short sequence motif" description="Effector region">
    <location>
        <begin position="32"/>
        <end position="40"/>
    </location>
</feature>
<feature type="binding site" evidence="3">
    <location>
        <begin position="10"/>
        <end position="17"/>
    </location>
    <ligand>
        <name>GTP</name>
        <dbReference type="ChEBI" id="CHEBI:37565"/>
    </ligand>
</feature>
<feature type="binding site" evidence="3">
    <location>
        <begin position="57"/>
        <end position="61"/>
    </location>
    <ligand>
        <name>GTP</name>
        <dbReference type="ChEBI" id="CHEBI:37565"/>
    </ligand>
</feature>
<feature type="binding site" evidence="3">
    <location>
        <begin position="116"/>
        <end position="119"/>
    </location>
    <ligand>
        <name>GTP</name>
        <dbReference type="ChEBI" id="CHEBI:37565"/>
    </ligand>
</feature>
<feature type="modified residue" description="Cysteine methyl ester" evidence="1">
    <location>
        <position position="186"/>
    </location>
</feature>
<feature type="lipid moiety-binding region" description="S-geranylgeranyl cysteine" evidence="3">
    <location>
        <position position="186"/>
    </location>
</feature>
<organism evidence="5">
    <name type="scientific">Drosophila simulans</name>
    <name type="common">Fruit fly</name>
    <dbReference type="NCBI Taxonomy" id="7240"/>
    <lineage>
        <taxon>Eukaryota</taxon>
        <taxon>Metazoa</taxon>
        <taxon>Ecdysozoa</taxon>
        <taxon>Arthropoda</taxon>
        <taxon>Hexapoda</taxon>
        <taxon>Insecta</taxon>
        <taxon>Pterygota</taxon>
        <taxon>Neoptera</taxon>
        <taxon>Endopterygota</taxon>
        <taxon>Diptera</taxon>
        <taxon>Brachycera</taxon>
        <taxon>Muscomorpha</taxon>
        <taxon>Ephydroidea</taxon>
        <taxon>Drosophilidae</taxon>
        <taxon>Drosophila</taxon>
        <taxon>Sophophora</taxon>
    </lineage>
</organism>
<accession>P83831</accession>
<accession>B4QWL7</accession>
<protein>
    <recommendedName>
        <fullName>Ras-like protein 1</fullName>
        <ecNumber evidence="2">3.6.5.2</ecNumber>
    </recommendedName>
</protein>
<keyword id="KW-1003">Cell membrane</keyword>
<keyword id="KW-0342">GTP-binding</keyword>
<keyword id="KW-0378">Hydrolase</keyword>
<keyword id="KW-0449">Lipoprotein</keyword>
<keyword id="KW-0472">Membrane</keyword>
<keyword id="KW-0488">Methylation</keyword>
<keyword id="KW-0547">Nucleotide-binding</keyword>
<keyword id="KW-0636">Prenylation</keyword>
<keyword id="KW-1185">Reference proteome</keyword>
<evidence type="ECO:0000250" key="1"/>
<evidence type="ECO:0000250" key="2">
    <source>
        <dbReference type="UniProtKB" id="P01112"/>
    </source>
</evidence>
<evidence type="ECO:0000250" key="3">
    <source>
        <dbReference type="UniProtKB" id="P08646"/>
    </source>
</evidence>
<evidence type="ECO:0000305" key="4"/>
<evidence type="ECO:0000312" key="5">
    <source>
        <dbReference type="EMBL" id="AAF15515.1"/>
    </source>
</evidence>
<gene>
    <name type="primary">Ras85D</name>
    <name type="synonym">Ras1</name>
    <name type="ORF">GD20791</name>
</gene>